<organism>
    <name type="scientific">Danio rerio</name>
    <name type="common">Zebrafish</name>
    <name type="synonym">Brachydanio rerio</name>
    <dbReference type="NCBI Taxonomy" id="7955"/>
    <lineage>
        <taxon>Eukaryota</taxon>
        <taxon>Metazoa</taxon>
        <taxon>Chordata</taxon>
        <taxon>Craniata</taxon>
        <taxon>Vertebrata</taxon>
        <taxon>Euteleostomi</taxon>
        <taxon>Actinopterygii</taxon>
        <taxon>Neopterygii</taxon>
        <taxon>Teleostei</taxon>
        <taxon>Ostariophysi</taxon>
        <taxon>Cypriniformes</taxon>
        <taxon>Danionidae</taxon>
        <taxon>Danioninae</taxon>
        <taxon>Danio</taxon>
    </lineage>
</organism>
<name>DLX6A_DANRE</name>
<keyword id="KW-0217">Developmental protein</keyword>
<keyword id="KW-0238">DNA-binding</keyword>
<keyword id="KW-0371">Homeobox</keyword>
<keyword id="KW-0539">Nucleus</keyword>
<keyword id="KW-1185">Reference proteome</keyword>
<evidence type="ECO:0000255" key="1">
    <source>
        <dbReference type="PROSITE-ProRule" id="PRU00108"/>
    </source>
</evidence>
<evidence type="ECO:0000256" key="2">
    <source>
        <dbReference type="SAM" id="MobiDB-lite"/>
    </source>
</evidence>
<evidence type="ECO:0000305" key="3"/>
<protein>
    <recommendedName>
        <fullName>Homeobox protein Dlx6a</fullName>
    </recommendedName>
    <alternativeName>
        <fullName>Distal-less homeobox protein 6a</fullName>
        <shortName>DLX-6</shortName>
    </alternativeName>
</protein>
<dbReference type="EMBL" id="U67844">
    <property type="protein sequence ID" value="AAC60027.1"/>
    <property type="molecule type" value="mRNA"/>
</dbReference>
<dbReference type="RefSeq" id="NP_571398.1">
    <property type="nucleotide sequence ID" value="NM_131323.1"/>
</dbReference>
<dbReference type="SMR" id="Q98877"/>
<dbReference type="FunCoup" id="Q98877">
    <property type="interactions" value="57"/>
</dbReference>
<dbReference type="STRING" id="7955.ENSDARP00000093553"/>
<dbReference type="PaxDb" id="7955-ENSDARP00000093553"/>
<dbReference type="Ensembl" id="ENSDART00000102778">
    <property type="protein sequence ID" value="ENSDARP00000093553"/>
    <property type="gene ID" value="ENSDARG00000042291"/>
</dbReference>
<dbReference type="GeneID" id="30586"/>
<dbReference type="KEGG" id="dre:30586"/>
<dbReference type="AGR" id="ZFIN:ZDB-GENE-980526-448"/>
<dbReference type="CTD" id="30586"/>
<dbReference type="ZFIN" id="ZDB-GENE-980526-448">
    <property type="gene designation" value="dlx6a"/>
</dbReference>
<dbReference type="eggNOG" id="KOG0850">
    <property type="taxonomic scope" value="Eukaryota"/>
</dbReference>
<dbReference type="HOGENOM" id="CLU_074733_2_0_1"/>
<dbReference type="InParanoid" id="Q98877"/>
<dbReference type="OMA" id="PSYHNNA"/>
<dbReference type="OrthoDB" id="6159439at2759"/>
<dbReference type="PhylomeDB" id="Q98877"/>
<dbReference type="TreeFam" id="TF315720"/>
<dbReference type="PRO" id="PR:Q98877"/>
<dbReference type="Proteomes" id="UP000000437">
    <property type="component" value="Chromosome 19"/>
</dbReference>
<dbReference type="Bgee" id="ENSDARG00000042291">
    <property type="expression patterns" value="Expressed in skeleton of lower jaw and 41 other cell types or tissues"/>
</dbReference>
<dbReference type="ExpressionAtlas" id="Q98877">
    <property type="expression patterns" value="baseline and differential"/>
</dbReference>
<dbReference type="GO" id="GO:0005634">
    <property type="term" value="C:nucleus"/>
    <property type="evidence" value="ECO:0007669"/>
    <property type="project" value="UniProtKB-SubCell"/>
</dbReference>
<dbReference type="GO" id="GO:0000981">
    <property type="term" value="F:DNA-binding transcription factor activity, RNA polymerase II-specific"/>
    <property type="evidence" value="ECO:0000318"/>
    <property type="project" value="GO_Central"/>
</dbReference>
<dbReference type="GO" id="GO:0000978">
    <property type="term" value="F:RNA polymerase II cis-regulatory region sequence-specific DNA binding"/>
    <property type="evidence" value="ECO:0000318"/>
    <property type="project" value="GO_Central"/>
</dbReference>
<dbReference type="GO" id="GO:0030154">
    <property type="term" value="P:cell differentiation"/>
    <property type="evidence" value="ECO:0000318"/>
    <property type="project" value="GO_Central"/>
</dbReference>
<dbReference type="GO" id="GO:0048706">
    <property type="term" value="P:embryonic skeletal system development"/>
    <property type="evidence" value="ECO:0000318"/>
    <property type="project" value="GO_Central"/>
</dbReference>
<dbReference type="GO" id="GO:0035141">
    <property type="term" value="P:medial fin morphogenesis"/>
    <property type="evidence" value="ECO:0000316"/>
    <property type="project" value="ZFIN"/>
</dbReference>
<dbReference type="GO" id="GO:0001841">
    <property type="term" value="P:neural tube formation"/>
    <property type="evidence" value="ECO:0000315"/>
    <property type="project" value="ZFIN"/>
</dbReference>
<dbReference type="GO" id="GO:0033339">
    <property type="term" value="P:pectoral fin development"/>
    <property type="evidence" value="ECO:0000316"/>
    <property type="project" value="ZFIN"/>
</dbReference>
<dbReference type="GO" id="GO:0006357">
    <property type="term" value="P:regulation of transcription by RNA polymerase II"/>
    <property type="evidence" value="ECO:0000318"/>
    <property type="project" value="GO_Central"/>
</dbReference>
<dbReference type="CDD" id="cd00086">
    <property type="entry name" value="homeodomain"/>
    <property type="match status" value="1"/>
</dbReference>
<dbReference type="FunFam" id="1.10.10.60:FF:000468">
    <property type="entry name" value="Distal-less homeobox 6"/>
    <property type="match status" value="1"/>
</dbReference>
<dbReference type="Gene3D" id="1.10.10.60">
    <property type="entry name" value="Homeodomain-like"/>
    <property type="match status" value="1"/>
</dbReference>
<dbReference type="InterPro" id="IPR050460">
    <property type="entry name" value="Distal-less_Homeobox_TF"/>
</dbReference>
<dbReference type="InterPro" id="IPR001356">
    <property type="entry name" value="HD"/>
</dbReference>
<dbReference type="InterPro" id="IPR020479">
    <property type="entry name" value="HD_metazoa"/>
</dbReference>
<dbReference type="InterPro" id="IPR017970">
    <property type="entry name" value="Homeobox_CS"/>
</dbReference>
<dbReference type="InterPro" id="IPR009057">
    <property type="entry name" value="Homeodomain-like_sf"/>
</dbReference>
<dbReference type="InterPro" id="IPR000047">
    <property type="entry name" value="HTH_motif"/>
</dbReference>
<dbReference type="PANTHER" id="PTHR24327">
    <property type="entry name" value="HOMEOBOX PROTEIN"/>
    <property type="match status" value="1"/>
</dbReference>
<dbReference type="PANTHER" id="PTHR24327:SF26">
    <property type="entry name" value="HOMEOBOX PROTEIN DLX-6"/>
    <property type="match status" value="1"/>
</dbReference>
<dbReference type="Pfam" id="PF00046">
    <property type="entry name" value="Homeodomain"/>
    <property type="match status" value="1"/>
</dbReference>
<dbReference type="PRINTS" id="PR00024">
    <property type="entry name" value="HOMEOBOX"/>
</dbReference>
<dbReference type="PRINTS" id="PR00031">
    <property type="entry name" value="HTHREPRESSR"/>
</dbReference>
<dbReference type="SMART" id="SM00389">
    <property type="entry name" value="HOX"/>
    <property type="match status" value="1"/>
</dbReference>
<dbReference type="SUPFAM" id="SSF46689">
    <property type="entry name" value="Homeodomain-like"/>
    <property type="match status" value="1"/>
</dbReference>
<dbReference type="PROSITE" id="PS00027">
    <property type="entry name" value="HOMEOBOX_1"/>
    <property type="match status" value="1"/>
</dbReference>
<dbReference type="PROSITE" id="PS50071">
    <property type="entry name" value="HOMEOBOX_2"/>
    <property type="match status" value="1"/>
</dbReference>
<comment type="subcellular location">
    <subcellularLocation>
        <location evidence="1">Nucleus</location>
    </subcellularLocation>
</comment>
<comment type="similarity">
    <text evidence="3">Belongs to the distal-less homeobox family.</text>
</comment>
<sequence>MMTMTTMADGLEAQDSSKSAFMEFGQQSHSQQSSPSMAASHYPLHCLHSGSHHHHQHDSSPYSGSNSYNRSLPYSYVSHPHHSPYLPSYHSNASGTQTRLDATEQQKTTVIENGEIRFNGKGKKIRKPRTIYSSLQLQALNHRFQQTQYLALPERAELAASLGLTQTQVKIWFQNKRSKFKKLLKQGGNPHETDTLPGSIALSPRSPAIPPIWDVSASSKGVNMSANSYMPGYSHWYSSPHQDAMQR</sequence>
<reference key="1">
    <citation type="journal article" date="1996" name="Proc. Natl. Acad. Sci. U.S.A.">
        <title>The evolution of the vertebrate Dlx gene family.</title>
        <authorList>
            <person name="Stock D.W."/>
            <person name="Ellies D.L."/>
            <person name="Zhao Z."/>
            <person name="Ekker M."/>
            <person name="Ruddle F.H."/>
            <person name="Weiss K.M."/>
        </authorList>
    </citation>
    <scope>NUCLEOTIDE SEQUENCE [MRNA]</scope>
    <source>
        <tissue>Larva</tissue>
    </source>
</reference>
<proteinExistence type="evidence at transcript level"/>
<gene>
    <name type="primary">dlx6a</name>
    <name type="synonym">dlx6</name>
</gene>
<accession>Q98877</accession>
<feature type="chain" id="PRO_0000049053" description="Homeobox protein Dlx6a">
    <location>
        <begin position="1"/>
        <end position="247"/>
    </location>
</feature>
<feature type="DNA-binding region" description="Homeobox" evidence="1">
    <location>
        <begin position="125"/>
        <end position="184"/>
    </location>
</feature>
<feature type="region of interest" description="Disordered" evidence="2">
    <location>
        <begin position="22"/>
        <end position="66"/>
    </location>
</feature>
<feature type="compositionally biased region" description="Low complexity" evidence="2">
    <location>
        <begin position="26"/>
        <end position="49"/>
    </location>
</feature>